<accession>Q6G747</accession>
<protein>
    <recommendedName>
        <fullName>Molybdenum cofactor biosynthesis protein B</fullName>
    </recommendedName>
</protein>
<dbReference type="EMBL" id="BX571857">
    <property type="protein sequence ID" value="CAG43976.1"/>
    <property type="molecule type" value="Genomic_DNA"/>
</dbReference>
<dbReference type="RefSeq" id="WP_000503820.1">
    <property type="nucleotide sequence ID" value="NC_002953.3"/>
</dbReference>
<dbReference type="SMR" id="Q6G747"/>
<dbReference type="KEGG" id="sas:SAS2165"/>
<dbReference type="HOGENOM" id="CLU_077358_2_3_9"/>
<dbReference type="UniPathway" id="UPA00344"/>
<dbReference type="GO" id="GO:0005829">
    <property type="term" value="C:cytosol"/>
    <property type="evidence" value="ECO:0007669"/>
    <property type="project" value="TreeGrafter"/>
</dbReference>
<dbReference type="GO" id="GO:0006777">
    <property type="term" value="P:Mo-molybdopterin cofactor biosynthetic process"/>
    <property type="evidence" value="ECO:0007669"/>
    <property type="project" value="UniProtKB-KW"/>
</dbReference>
<dbReference type="CDD" id="cd00886">
    <property type="entry name" value="MogA_MoaB"/>
    <property type="match status" value="1"/>
</dbReference>
<dbReference type="FunFam" id="3.40.980.10:FF:000006">
    <property type="entry name" value="Molybdenum cofactor biosynthesis protein B"/>
    <property type="match status" value="1"/>
</dbReference>
<dbReference type="Gene3D" id="3.40.980.10">
    <property type="entry name" value="MoaB/Mog-like domain"/>
    <property type="match status" value="1"/>
</dbReference>
<dbReference type="InterPro" id="IPR012245">
    <property type="entry name" value="MoaB"/>
</dbReference>
<dbReference type="InterPro" id="IPR036425">
    <property type="entry name" value="MoaB/Mog-like_dom_sf"/>
</dbReference>
<dbReference type="InterPro" id="IPR001453">
    <property type="entry name" value="MoaB/Mog_dom"/>
</dbReference>
<dbReference type="InterPro" id="IPR008284">
    <property type="entry name" value="MoCF_biosynth_CS"/>
</dbReference>
<dbReference type="NCBIfam" id="TIGR00177">
    <property type="entry name" value="molyb_syn"/>
    <property type="match status" value="1"/>
</dbReference>
<dbReference type="PANTHER" id="PTHR43232">
    <property type="entry name" value="MOLYBDENUM COFACTOR BIOSYNTHESIS PROTEIN B"/>
    <property type="match status" value="1"/>
</dbReference>
<dbReference type="PANTHER" id="PTHR43232:SF2">
    <property type="entry name" value="MOLYBDENUM COFACTOR BIOSYNTHESIS PROTEIN B"/>
    <property type="match status" value="1"/>
</dbReference>
<dbReference type="Pfam" id="PF00994">
    <property type="entry name" value="MoCF_biosynth"/>
    <property type="match status" value="1"/>
</dbReference>
<dbReference type="PIRSF" id="PIRSF006443">
    <property type="entry name" value="MoaB"/>
    <property type="match status" value="1"/>
</dbReference>
<dbReference type="SMART" id="SM00852">
    <property type="entry name" value="MoCF_biosynth"/>
    <property type="match status" value="1"/>
</dbReference>
<dbReference type="SUPFAM" id="SSF53218">
    <property type="entry name" value="Molybdenum cofactor biosynthesis proteins"/>
    <property type="match status" value="1"/>
</dbReference>
<dbReference type="PROSITE" id="PS01078">
    <property type="entry name" value="MOCF_BIOSYNTHESIS_1"/>
    <property type="match status" value="1"/>
</dbReference>
<reference key="1">
    <citation type="journal article" date="2004" name="Proc. Natl. Acad. Sci. U.S.A.">
        <title>Complete genomes of two clinical Staphylococcus aureus strains: evidence for the rapid evolution of virulence and drug resistance.</title>
        <authorList>
            <person name="Holden M.T.G."/>
            <person name="Feil E.J."/>
            <person name="Lindsay J.A."/>
            <person name="Peacock S.J."/>
            <person name="Day N.P.J."/>
            <person name="Enright M.C."/>
            <person name="Foster T.J."/>
            <person name="Moore C.E."/>
            <person name="Hurst L."/>
            <person name="Atkin R."/>
            <person name="Barron A."/>
            <person name="Bason N."/>
            <person name="Bentley S.D."/>
            <person name="Chillingworth C."/>
            <person name="Chillingworth T."/>
            <person name="Churcher C."/>
            <person name="Clark L."/>
            <person name="Corton C."/>
            <person name="Cronin A."/>
            <person name="Doggett J."/>
            <person name="Dowd L."/>
            <person name="Feltwell T."/>
            <person name="Hance Z."/>
            <person name="Harris B."/>
            <person name="Hauser H."/>
            <person name="Holroyd S."/>
            <person name="Jagels K."/>
            <person name="James K.D."/>
            <person name="Lennard N."/>
            <person name="Line A."/>
            <person name="Mayes R."/>
            <person name="Moule S."/>
            <person name="Mungall K."/>
            <person name="Ormond D."/>
            <person name="Quail M.A."/>
            <person name="Rabbinowitsch E."/>
            <person name="Rutherford K.M."/>
            <person name="Sanders M."/>
            <person name="Sharp S."/>
            <person name="Simmonds M."/>
            <person name="Stevens K."/>
            <person name="Whitehead S."/>
            <person name="Barrell B.G."/>
            <person name="Spratt B.G."/>
            <person name="Parkhill J."/>
        </authorList>
    </citation>
    <scope>NUCLEOTIDE SEQUENCE [LARGE SCALE GENOMIC DNA]</scope>
    <source>
        <strain>MSSA476</strain>
    </source>
</reference>
<organism>
    <name type="scientific">Staphylococcus aureus (strain MSSA476)</name>
    <dbReference type="NCBI Taxonomy" id="282459"/>
    <lineage>
        <taxon>Bacteria</taxon>
        <taxon>Bacillati</taxon>
        <taxon>Bacillota</taxon>
        <taxon>Bacilli</taxon>
        <taxon>Bacillales</taxon>
        <taxon>Staphylococcaceae</taxon>
        <taxon>Staphylococcus</taxon>
    </lineage>
</organism>
<name>MOAB_STAAS</name>
<evidence type="ECO:0000250" key="1"/>
<evidence type="ECO:0000305" key="2"/>
<comment type="function">
    <text evidence="1">May be involved in the biosynthesis of molybdopterin.</text>
</comment>
<comment type="pathway">
    <text>Cofactor biosynthesis; molybdopterin biosynthesis.</text>
</comment>
<comment type="similarity">
    <text evidence="2">Belongs to the MoaB/Mog family.</text>
</comment>
<sequence>MGEHQNVKLNRTVKAAVLTVSDTRDFDTDKGGQCVRQLLQADDVEVSDAHYTIVKDEKVAITTQVKKWLEEDIDVIITTGGTGIAQRDVTIEAVKPLLTKEIEGFGELFRYLSYVEDVGTRALLSRAVAGTVNNKLIFSIPGSTGAVKLALEKLIKPELNHLIHELTK</sequence>
<gene>
    <name type="primary">moaB</name>
    <name type="ordered locus">SAS2165</name>
</gene>
<proteinExistence type="inferred from homology"/>
<keyword id="KW-0501">Molybdenum cofactor biosynthesis</keyword>
<feature type="chain" id="PRO_0000170976" description="Molybdenum cofactor biosynthesis protein B">
    <location>
        <begin position="1"/>
        <end position="168"/>
    </location>
</feature>